<organism>
    <name type="scientific">Streptococcus mutans serotype c (strain ATCC 700610 / UA159)</name>
    <dbReference type="NCBI Taxonomy" id="210007"/>
    <lineage>
        <taxon>Bacteria</taxon>
        <taxon>Bacillati</taxon>
        <taxon>Bacillota</taxon>
        <taxon>Bacilli</taxon>
        <taxon>Lactobacillales</taxon>
        <taxon>Streptococcaceae</taxon>
        <taxon>Streptococcus</taxon>
    </lineage>
</organism>
<sequence>MASKDFHIVAETGIHARPATLLVQTASKFASDITLDYKGKAVNLKSIMGVMSLGVGQGADVTITAEGADADDAIAAINETMTKEGLA</sequence>
<feature type="initiator methionine" description="Removed" evidence="3">
    <location>
        <position position="1"/>
    </location>
</feature>
<feature type="chain" id="PRO_0000107883" description="Phosphocarrier protein HPr">
    <location>
        <begin position="2"/>
        <end position="87"/>
    </location>
</feature>
<feature type="domain" description="HPr" evidence="2">
    <location>
        <begin position="2"/>
        <end position="87"/>
    </location>
</feature>
<feature type="active site" description="Pros-phosphohistidine intermediate" evidence="2">
    <location>
        <position position="15"/>
    </location>
</feature>
<feature type="modified residue" description="Phosphoserine; by HPrK/P" evidence="2">
    <location>
        <position position="46"/>
    </location>
</feature>
<reference key="1">
    <citation type="journal article" date="1994" name="Infect. Immun.">
        <title>Sequence and expression of the genes for HPr (ptsH) and enzyme I (ptsI) of the phosphoenolpyruvate-dependent phosphotransferase transport system from Streptococcus mutans.</title>
        <authorList>
            <person name="Boyd D.A."/>
            <person name="Cvitkovitch D.G."/>
            <person name="Hamilton I.R."/>
        </authorList>
    </citation>
    <scope>NUCLEOTIDE SEQUENCE [GENOMIC DNA]</scope>
    <source>
        <strain>NG5 / Serotype c</strain>
    </source>
</reference>
<reference key="2">
    <citation type="journal article" date="2002" name="Proc. Natl. Acad. Sci. U.S.A.">
        <title>Genome sequence of Streptococcus mutans UA159, a cariogenic dental pathogen.</title>
        <authorList>
            <person name="Ajdic D.J."/>
            <person name="McShan W.M."/>
            <person name="McLaughlin R.E."/>
            <person name="Savic G."/>
            <person name="Chang J."/>
            <person name="Carson M.B."/>
            <person name="Primeaux C."/>
            <person name="Tian R."/>
            <person name="Kenton S."/>
            <person name="Jia H.G."/>
            <person name="Lin S.P."/>
            <person name="Qian Y."/>
            <person name="Li S."/>
            <person name="Zhu H."/>
            <person name="Najar F.Z."/>
            <person name="Lai H."/>
            <person name="White J."/>
            <person name="Roe B.A."/>
            <person name="Ferretti J.J."/>
        </authorList>
    </citation>
    <scope>NUCLEOTIDE SEQUENCE [LARGE SCALE GENOMIC DNA]</scope>
    <source>
        <strain>ATCC 700610 / UA159</strain>
    </source>
</reference>
<reference key="3">
    <citation type="journal article" date="1994" name="Biochem. Biophys. Res. Commun.">
        <title>Complete amino acid sequence and comparative molecular modelling of HPr from Streptococcus mutans Ingbritt.</title>
        <authorList>
            <person name="Dashper S.G."/>
            <person name="Kirszbaum L."/>
            <person name="Huq N.L."/>
            <person name="Riley P.F."/>
            <person name="Reynolds E.C."/>
        </authorList>
    </citation>
    <scope>PROTEIN SEQUENCE OF 2-87</scope>
    <source>
        <strain>Ingbritt</strain>
    </source>
</reference>
<proteinExistence type="evidence at protein level"/>
<comment type="function">
    <text>General (non sugar-specific) component of the phosphoenolpyruvate-dependent sugar phosphotransferase system (sugar PTS). This major carbohydrate active-transport system catalyzes the phosphorylation of incoming sugar substrates concomitantly with their translocation across the cell membrane. The phosphoryl group from phosphoenolpyruvate (PEP) is transferred to the phosphoryl carrier protein HPr by enzyme I. Phospho-HPr then transfers it to the PTS EIIA domain.</text>
</comment>
<comment type="function">
    <text evidence="1">P-Ser-HPr interacts with the catabolite control protein A (CcpA), forming a complex that binds to DNA at the catabolite response elements cre, operator sites preceding a large number of catabolite-regulated genes. Thus, P-Ser-HPr is a corepressor in carbon catabolite repression (CCR), a mechanism that allows bacteria to coordinate and optimize the utilization of available carbon sources. P-Ser-HPr also plays a role in inducer exclusion, in which it probably interacts with several non-PTS permeases and inhibits their transport activity (By similarity).</text>
</comment>
<comment type="activity regulation">
    <text evidence="1">Phosphorylation on Ser-46 inhibits the phosphoryl transfer from enzyme I to HPr.</text>
</comment>
<comment type="subcellular location">
    <subcellularLocation>
        <location>Cytoplasm</location>
    </subcellularLocation>
</comment>
<comment type="similarity">
    <text evidence="4">Belongs to the HPr family.</text>
</comment>
<accession>P45596</accession>
<evidence type="ECO:0000250" key="1"/>
<evidence type="ECO:0000255" key="2">
    <source>
        <dbReference type="PROSITE-ProRule" id="PRU00681"/>
    </source>
</evidence>
<evidence type="ECO:0000269" key="3">
    <source>
    </source>
</evidence>
<evidence type="ECO:0000305" key="4"/>
<name>PTHP_STRMU</name>
<gene>
    <name type="primary">ptsH</name>
    <name type="ordered locus">SMU_674</name>
</gene>
<protein>
    <recommendedName>
        <fullName>Phosphocarrier protein HPr</fullName>
    </recommendedName>
    <alternativeName>
        <fullName>Histidine-containing protein</fullName>
    </alternativeName>
</protein>
<dbReference type="EMBL" id="L15191">
    <property type="protein sequence ID" value="AAA91092.1"/>
    <property type="molecule type" value="Genomic_DNA"/>
</dbReference>
<dbReference type="EMBL" id="AE014133">
    <property type="protein sequence ID" value="AAN58408.1"/>
    <property type="molecule type" value="Genomic_DNA"/>
</dbReference>
<dbReference type="PIR" id="A44562">
    <property type="entry name" value="A44562"/>
</dbReference>
<dbReference type="RefSeq" id="NP_721102.1">
    <property type="nucleotide sequence ID" value="NC_004350.2"/>
</dbReference>
<dbReference type="RefSeq" id="WP_002262984.1">
    <property type="nucleotide sequence ID" value="NC_004350.2"/>
</dbReference>
<dbReference type="SMR" id="P45596"/>
<dbReference type="STRING" id="210007.SMU_674"/>
<dbReference type="KEGG" id="smu:SMU_674"/>
<dbReference type="PATRIC" id="fig|210007.7.peg.599"/>
<dbReference type="eggNOG" id="COG1925">
    <property type="taxonomic scope" value="Bacteria"/>
</dbReference>
<dbReference type="HOGENOM" id="CLU_136230_2_1_9"/>
<dbReference type="OrthoDB" id="9809047at2"/>
<dbReference type="PhylomeDB" id="P45596"/>
<dbReference type="Proteomes" id="UP000002512">
    <property type="component" value="Chromosome"/>
</dbReference>
<dbReference type="GO" id="GO:0005737">
    <property type="term" value="C:cytoplasm"/>
    <property type="evidence" value="ECO:0007669"/>
    <property type="project" value="UniProtKB-SubCell"/>
</dbReference>
<dbReference type="GO" id="GO:0009401">
    <property type="term" value="P:phosphoenolpyruvate-dependent sugar phosphotransferase system"/>
    <property type="evidence" value="ECO:0007669"/>
    <property type="project" value="UniProtKB-KW"/>
</dbReference>
<dbReference type="CDD" id="cd00367">
    <property type="entry name" value="PTS-HPr_like"/>
    <property type="match status" value="1"/>
</dbReference>
<dbReference type="Gene3D" id="3.30.1340.10">
    <property type="entry name" value="HPr-like"/>
    <property type="match status" value="1"/>
</dbReference>
<dbReference type="InterPro" id="IPR050399">
    <property type="entry name" value="HPr"/>
</dbReference>
<dbReference type="InterPro" id="IPR000032">
    <property type="entry name" value="HPr-like"/>
</dbReference>
<dbReference type="InterPro" id="IPR035895">
    <property type="entry name" value="HPr-like_sf"/>
</dbReference>
<dbReference type="InterPro" id="IPR001020">
    <property type="entry name" value="PTS_HPr_His_P_site"/>
</dbReference>
<dbReference type="InterPro" id="IPR002114">
    <property type="entry name" value="PTS_HPr_Ser_P_site"/>
</dbReference>
<dbReference type="NCBIfam" id="NF010352">
    <property type="entry name" value="PRK13780.1"/>
    <property type="match status" value="1"/>
</dbReference>
<dbReference type="NCBIfam" id="TIGR01003">
    <property type="entry name" value="PTS_HPr_family"/>
    <property type="match status" value="1"/>
</dbReference>
<dbReference type="PANTHER" id="PTHR33705">
    <property type="entry name" value="PHOSPHOCARRIER PROTEIN HPR"/>
    <property type="match status" value="1"/>
</dbReference>
<dbReference type="PANTHER" id="PTHR33705:SF2">
    <property type="entry name" value="PHOSPHOCARRIER PROTEIN NPR"/>
    <property type="match status" value="1"/>
</dbReference>
<dbReference type="Pfam" id="PF00381">
    <property type="entry name" value="PTS-HPr"/>
    <property type="match status" value="1"/>
</dbReference>
<dbReference type="PRINTS" id="PR00107">
    <property type="entry name" value="PHOSPHOCPHPR"/>
</dbReference>
<dbReference type="SUPFAM" id="SSF55594">
    <property type="entry name" value="HPr-like"/>
    <property type="match status" value="1"/>
</dbReference>
<dbReference type="PROSITE" id="PS51350">
    <property type="entry name" value="PTS_HPR_DOM"/>
    <property type="match status" value="1"/>
</dbReference>
<dbReference type="PROSITE" id="PS00369">
    <property type="entry name" value="PTS_HPR_HIS"/>
    <property type="match status" value="1"/>
</dbReference>
<dbReference type="PROSITE" id="PS00589">
    <property type="entry name" value="PTS_HPR_SER"/>
    <property type="match status" value="1"/>
</dbReference>
<keyword id="KW-0963">Cytoplasm</keyword>
<keyword id="KW-0903">Direct protein sequencing</keyword>
<keyword id="KW-0597">Phosphoprotein</keyword>
<keyword id="KW-0598">Phosphotransferase system</keyword>
<keyword id="KW-1185">Reference proteome</keyword>
<keyword id="KW-0762">Sugar transport</keyword>
<keyword id="KW-0804">Transcription</keyword>
<keyword id="KW-0805">Transcription regulation</keyword>
<keyword id="KW-0813">Transport</keyword>